<protein>
    <recommendedName>
        <fullName evidence="1 6">Phenolic acid decarboxylase</fullName>
        <shortName evidence="1 6">PAD</shortName>
    </recommendedName>
    <alternativeName>
        <fullName evidence="6">4-hydroxybenzoate decarboxylase</fullName>
        <shortName evidence="6">4-hydroxybenzoate DC</shortName>
        <ecNumber evidence="4 10">4.1.1.61</ecNumber>
    </alternativeName>
    <alternativeName>
        <fullName evidence="6">Phenolic acid decarboxylase subunit C</fullName>
    </alternativeName>
    <alternativeName>
        <fullName evidence="6">Vanillate decarboxylase</fullName>
        <shortName evidence="6">Vanillate DC</shortName>
        <ecNumber evidence="10">4.1.1.-</ecNumber>
    </alternativeName>
</protein>
<comment type="function">
    <text evidence="2 4 11">Involved in the non-oxidative decarboxylation and detoxification of phenolic derivatives under both aerobic and anaerobic conditions (PubMed:15979273, PubMed:18388975). Phenolic acid decarboxylase that catalyzes the reversible decarboxylation of 4-hydroxybenzoate and vanillate (PubMed:15979273, PubMed:18388975). Could also catalyze the decarboxylation of salicylate (Probable). Is not active on di- and tri-hydroxybenzoate derivatives (PubMed:18388975).</text>
</comment>
<comment type="catalytic activity">
    <reaction evidence="4 10">
        <text>4-hydroxybenzoate + H(+) = phenol + CO2</text>
        <dbReference type="Rhea" id="RHEA:10876"/>
        <dbReference type="ChEBI" id="CHEBI:15378"/>
        <dbReference type="ChEBI" id="CHEBI:15882"/>
        <dbReference type="ChEBI" id="CHEBI:16526"/>
        <dbReference type="ChEBI" id="CHEBI:17879"/>
        <dbReference type="EC" id="4.1.1.61"/>
    </reaction>
</comment>
<comment type="catalytic activity">
    <reaction evidence="10">
        <text>vanillate + H(+) = guaiacol + CO2</text>
        <dbReference type="Rhea" id="RHEA:51528"/>
        <dbReference type="ChEBI" id="CHEBI:15378"/>
        <dbReference type="ChEBI" id="CHEBI:16526"/>
        <dbReference type="ChEBI" id="CHEBI:16632"/>
        <dbReference type="ChEBI" id="CHEBI:28591"/>
    </reaction>
</comment>
<comment type="cofactor">
    <cofactor evidence="1">
        <name>prenylated FMN</name>
        <dbReference type="ChEBI" id="CHEBI:87746"/>
    </cofactor>
    <text evidence="1">Binds 1 prenylated FMN per subunit.</text>
</comment>
<comment type="cofactor">
    <cofactor evidence="1">
        <name>Mn(2+)</name>
        <dbReference type="ChEBI" id="CHEBI:29035"/>
    </cofactor>
</comment>
<comment type="induction">
    <text evidence="3">Up-regulated by salicylate via the transcriptional regulator BsdA.</text>
</comment>
<comment type="disruption phenotype">
    <text evidence="5">A triple bsdB-bsdC-bsdD deletion mutant no longer converts vanillin to guaiacol, the conversion stops at vanillic acid (PubMed:26658822).</text>
</comment>
<comment type="miscellaneous">
    <text evidence="9">It is not known, if phenolic acid decarboxylase forms a complex composed of BsdB, BsdC and BsdD. The term subunit is often used in reference to the operon, however there is no experimental evidence to prove the existence of the complex.</text>
</comment>
<comment type="similarity">
    <text evidence="1">Belongs to the UbiD family. YclC subfamily.</text>
</comment>
<organism>
    <name type="scientific">Bacillus subtilis (strain 168)</name>
    <dbReference type="NCBI Taxonomy" id="224308"/>
    <lineage>
        <taxon>Bacteria</taxon>
        <taxon>Bacillati</taxon>
        <taxon>Bacillota</taxon>
        <taxon>Bacilli</taxon>
        <taxon>Bacillales</taxon>
        <taxon>Bacillaceae</taxon>
        <taxon>Bacillus</taxon>
    </lineage>
</organism>
<name>YCLC_BACSU</name>
<reference key="1">
    <citation type="journal article" date="1996" name="Microbiology">
        <title>The 25 degrees-36 degrees region of the Bacillus subtilis chromosome: determination of the sequence of a 146 kb segment and identification of 113 genes.</title>
        <authorList>
            <person name="Yamane K."/>
            <person name="Kumano M."/>
            <person name="Kurita K."/>
        </authorList>
    </citation>
    <scope>NUCLEOTIDE SEQUENCE [GENOMIC DNA]</scope>
    <source>
        <strain>168</strain>
    </source>
</reference>
<reference key="2">
    <citation type="journal article" date="1997" name="Nature">
        <title>The complete genome sequence of the Gram-positive bacterium Bacillus subtilis.</title>
        <authorList>
            <person name="Kunst F."/>
            <person name="Ogasawara N."/>
            <person name="Moszer I."/>
            <person name="Albertini A.M."/>
            <person name="Alloni G."/>
            <person name="Azevedo V."/>
            <person name="Bertero M.G."/>
            <person name="Bessieres P."/>
            <person name="Bolotin A."/>
            <person name="Borchert S."/>
            <person name="Borriss R."/>
            <person name="Boursier L."/>
            <person name="Brans A."/>
            <person name="Braun M."/>
            <person name="Brignell S.C."/>
            <person name="Bron S."/>
            <person name="Brouillet S."/>
            <person name="Bruschi C.V."/>
            <person name="Caldwell B."/>
            <person name="Capuano V."/>
            <person name="Carter N.M."/>
            <person name="Choi S.-K."/>
            <person name="Codani J.-J."/>
            <person name="Connerton I.F."/>
            <person name="Cummings N.J."/>
            <person name="Daniel R.A."/>
            <person name="Denizot F."/>
            <person name="Devine K.M."/>
            <person name="Duesterhoeft A."/>
            <person name="Ehrlich S.D."/>
            <person name="Emmerson P.T."/>
            <person name="Entian K.-D."/>
            <person name="Errington J."/>
            <person name="Fabret C."/>
            <person name="Ferrari E."/>
            <person name="Foulger D."/>
            <person name="Fritz C."/>
            <person name="Fujita M."/>
            <person name="Fujita Y."/>
            <person name="Fuma S."/>
            <person name="Galizzi A."/>
            <person name="Galleron N."/>
            <person name="Ghim S.-Y."/>
            <person name="Glaser P."/>
            <person name="Goffeau A."/>
            <person name="Golightly E.J."/>
            <person name="Grandi G."/>
            <person name="Guiseppi G."/>
            <person name="Guy B.J."/>
            <person name="Haga K."/>
            <person name="Haiech J."/>
            <person name="Harwood C.R."/>
            <person name="Henaut A."/>
            <person name="Hilbert H."/>
            <person name="Holsappel S."/>
            <person name="Hosono S."/>
            <person name="Hullo M.-F."/>
            <person name="Itaya M."/>
            <person name="Jones L.-M."/>
            <person name="Joris B."/>
            <person name="Karamata D."/>
            <person name="Kasahara Y."/>
            <person name="Klaerr-Blanchard M."/>
            <person name="Klein C."/>
            <person name="Kobayashi Y."/>
            <person name="Koetter P."/>
            <person name="Koningstein G."/>
            <person name="Krogh S."/>
            <person name="Kumano M."/>
            <person name="Kurita K."/>
            <person name="Lapidus A."/>
            <person name="Lardinois S."/>
            <person name="Lauber J."/>
            <person name="Lazarevic V."/>
            <person name="Lee S.-M."/>
            <person name="Levine A."/>
            <person name="Liu H."/>
            <person name="Masuda S."/>
            <person name="Mauel C."/>
            <person name="Medigue C."/>
            <person name="Medina N."/>
            <person name="Mellado R.P."/>
            <person name="Mizuno M."/>
            <person name="Moestl D."/>
            <person name="Nakai S."/>
            <person name="Noback M."/>
            <person name="Noone D."/>
            <person name="O'Reilly M."/>
            <person name="Ogawa K."/>
            <person name="Ogiwara A."/>
            <person name="Oudega B."/>
            <person name="Park S.-H."/>
            <person name="Parro V."/>
            <person name="Pohl T.M."/>
            <person name="Portetelle D."/>
            <person name="Porwollik S."/>
            <person name="Prescott A.M."/>
            <person name="Presecan E."/>
            <person name="Pujic P."/>
            <person name="Purnelle B."/>
            <person name="Rapoport G."/>
            <person name="Rey M."/>
            <person name="Reynolds S."/>
            <person name="Rieger M."/>
            <person name="Rivolta C."/>
            <person name="Rocha E."/>
            <person name="Roche B."/>
            <person name="Rose M."/>
            <person name="Sadaie Y."/>
            <person name="Sato T."/>
            <person name="Scanlan E."/>
            <person name="Schleich S."/>
            <person name="Schroeter R."/>
            <person name="Scoffone F."/>
            <person name="Sekiguchi J."/>
            <person name="Sekowska A."/>
            <person name="Seror S.J."/>
            <person name="Serror P."/>
            <person name="Shin B.-S."/>
            <person name="Soldo B."/>
            <person name="Sorokin A."/>
            <person name="Tacconi E."/>
            <person name="Takagi T."/>
            <person name="Takahashi H."/>
            <person name="Takemaru K."/>
            <person name="Takeuchi M."/>
            <person name="Tamakoshi A."/>
            <person name="Tanaka T."/>
            <person name="Terpstra P."/>
            <person name="Tognoni A."/>
            <person name="Tosato V."/>
            <person name="Uchiyama S."/>
            <person name="Vandenbol M."/>
            <person name="Vannier F."/>
            <person name="Vassarotti A."/>
            <person name="Viari A."/>
            <person name="Wambutt R."/>
            <person name="Wedler E."/>
            <person name="Wedler H."/>
            <person name="Weitzenegger T."/>
            <person name="Winters P."/>
            <person name="Wipat A."/>
            <person name="Yamamoto H."/>
            <person name="Yamane K."/>
            <person name="Yasumoto K."/>
            <person name="Yata K."/>
            <person name="Yoshida K."/>
            <person name="Yoshikawa H.-F."/>
            <person name="Zumstein E."/>
            <person name="Yoshikawa H."/>
            <person name="Danchin A."/>
        </authorList>
    </citation>
    <scope>NUCLEOTIDE SEQUENCE [LARGE SCALE GENOMIC DNA]</scope>
    <source>
        <strain>168</strain>
    </source>
</reference>
<reference key="3">
    <citation type="journal article" date="2005" name="Genomics">
        <title>Distribution of genes encoding the microbial non-oxidative reversible hydroxyarylic acid decarboxylases/phenol carboxylases.</title>
        <authorList>
            <person name="Lupa B."/>
            <person name="Lyon D."/>
            <person name="Gibbs M.D."/>
            <person name="Reeves R.A."/>
            <person name="Wiegel J."/>
        </authorList>
    </citation>
    <scope>FUNCTION</scope>
    <scope>CATALYTIC ACTIVITY</scope>
    <scope>SUBSTRATE SPECIFICITY</scope>
    <source>
        <strain>168</strain>
    </source>
</reference>
<reference key="4">
    <citation type="journal article" date="2007" name="Proteomics">
        <title>The proteome and transcriptome analysis of Bacillus subtilis in response to salicylic acid.</title>
        <authorList>
            <person name="Duy N.V."/>
            <person name="Maeder U."/>
            <person name="Tran N.P."/>
            <person name="Cavin J.-F."/>
            <person name="Tam le T."/>
            <person name="Albrecht D."/>
            <person name="Hecker M."/>
            <person name="Antelmann H."/>
        </authorList>
    </citation>
    <scope>FUNCTION</scope>
    <scope>INDUCTION</scope>
    <source>
        <strain>168</strain>
    </source>
</reference>
<reference key="5">
    <citation type="journal article" date="2008" name="Can. J. Microbiol.">
        <title>Properties of the reversible nonoxidative vanillate/4-hydroxybenzoate decarboxylase from Bacillus subtilis.</title>
        <authorList>
            <person name="Lupa B."/>
            <person name="Lyon D."/>
            <person name="Shaw L.N."/>
            <person name="Sieprawska-Lupa M."/>
            <person name="Wiegel J."/>
        </authorList>
    </citation>
    <scope>FUNCTION IN DETOXIFICATION OF PHENOLIC DERIVATIVES</scope>
    <scope>CATALYTIC ACTIVITY</scope>
    <scope>SUBSTRATE SPECIFICITY</scope>
    <source>
        <strain>168 / Marburg / ATCC 6051 / DSM 10 / JCM 1465 / NBRC 13719 / NCIMB 3610 / NRRL NRS-744 / VKM B-501</strain>
    </source>
</reference>
<reference key="6">
    <citation type="journal article" date="2016" name="Appl. Microbiol. Biotechnol.">
        <title>Identification and characterization of the vanillin dehydrogenase YfmT in Bacillus subtilis 3NA.</title>
        <authorList>
            <person name="Graf N."/>
            <person name="Wenzel M."/>
            <person name="Altenbuchner J."/>
        </authorList>
    </citation>
    <scope>DISRUPTION PHENOTYPE</scope>
    <source>
        <strain>168 / 3NA</strain>
    </source>
</reference>
<gene>
    <name evidence="6" type="primary">bsdC</name>
    <name evidence="7" type="synonym">ubiD</name>
    <name evidence="8" type="synonym">yclC</name>
    <name type="ordered locus">BSU03640</name>
</gene>
<sequence length="473" mass="53027">MAYQDFREFLAALEKEGQLLTVNEEVKPEPDLGASARAASNLGDKSPALLFNNIYGYHNARIAMNVIGSWPNHAMMLGMPKDTPVKEQFFEFAKRYDQFPMPVKREETAPFHENEITEDINLFDILPLFRINQGDGGYYLDKACVISRDLEDPDNFGKQNVGIYRMQVKGKDRLGIQPVPQHDIAIHLRQAEERGINLPVTIALGCEPVITTAASTPLLYDQSEYEMAGAIQGEPYRIVKSKLSDLDVPWGAEVVLEGEIIAGEREYEGPFGEFTGHYSGGRSMPIIKIKRVYHRNNPIFEHLYLGMPWTECDYMIGINTCVPLYQQLKEAYPNEIVAVNAMYTHGLIAIVSTKTRYGGFAKAVGMRALTTPHGLGYCKMVIVVDEDVDPFNLPQVMWALSTKMHPKHDAVIIPDLSVLPLDPGSNPSGITHKMILDATTPVAPETRGHYSQPLDSPLTTKEWEQKLMDLMNK</sequence>
<evidence type="ECO:0000255" key="1">
    <source>
        <dbReference type="HAMAP-Rule" id="MF_01985"/>
    </source>
</evidence>
<evidence type="ECO:0000269" key="2">
    <source>
    </source>
</evidence>
<evidence type="ECO:0000269" key="3">
    <source>
    </source>
</evidence>
<evidence type="ECO:0000269" key="4">
    <source>
    </source>
</evidence>
<evidence type="ECO:0000269" key="5">
    <source>
    </source>
</evidence>
<evidence type="ECO:0000303" key="6">
    <source>
    </source>
</evidence>
<evidence type="ECO:0000303" key="7">
    <source>
    </source>
</evidence>
<evidence type="ECO:0000303" key="8">
    <source>
    </source>
</evidence>
<evidence type="ECO:0000305" key="9"/>
<evidence type="ECO:0000305" key="10">
    <source>
    </source>
</evidence>
<evidence type="ECO:0000305" key="11">
    <source>
    </source>
</evidence>
<keyword id="KW-0058">Aromatic hydrocarbons catabolism</keyword>
<keyword id="KW-0210">Decarboxylase</keyword>
<keyword id="KW-0216">Detoxification</keyword>
<keyword id="KW-0285">Flavoprotein</keyword>
<keyword id="KW-0288">FMN</keyword>
<keyword id="KW-0456">Lyase</keyword>
<keyword id="KW-0464">Manganese</keyword>
<keyword id="KW-0479">Metal-binding</keyword>
<keyword id="KW-1185">Reference proteome</keyword>
<accession>P94405</accession>
<dbReference type="EC" id="4.1.1.61" evidence="4 10"/>
<dbReference type="EC" id="4.1.1.-" evidence="10"/>
<dbReference type="EMBL" id="D50453">
    <property type="protein sequence ID" value="BAA08997.1"/>
    <property type="molecule type" value="Genomic_DNA"/>
</dbReference>
<dbReference type="EMBL" id="AL009126">
    <property type="protein sequence ID" value="CAB12158.1"/>
    <property type="molecule type" value="Genomic_DNA"/>
</dbReference>
<dbReference type="PIR" id="H69761">
    <property type="entry name" value="H69761"/>
</dbReference>
<dbReference type="RefSeq" id="NP_388246.1">
    <property type="nucleotide sequence ID" value="NC_000964.3"/>
</dbReference>
<dbReference type="RefSeq" id="WP_003246683.1">
    <property type="nucleotide sequence ID" value="NZ_OZ025638.1"/>
</dbReference>
<dbReference type="SMR" id="P94405"/>
<dbReference type="FunCoup" id="P94405">
    <property type="interactions" value="166"/>
</dbReference>
<dbReference type="STRING" id="224308.BSU03640"/>
<dbReference type="PaxDb" id="224308-BSU03640"/>
<dbReference type="EnsemblBacteria" id="CAB12158">
    <property type="protein sequence ID" value="CAB12158"/>
    <property type="gene ID" value="BSU_03640"/>
</dbReference>
<dbReference type="GeneID" id="938291"/>
<dbReference type="KEGG" id="bsu:BSU03640"/>
<dbReference type="PATRIC" id="fig|224308.179.peg.383"/>
<dbReference type="eggNOG" id="COG0043">
    <property type="taxonomic scope" value="Bacteria"/>
</dbReference>
<dbReference type="InParanoid" id="P94405"/>
<dbReference type="OrthoDB" id="9809841at2"/>
<dbReference type="PhylomeDB" id="P94405"/>
<dbReference type="BioCyc" id="BSUB:BSU03640-MONOMER"/>
<dbReference type="Proteomes" id="UP000001570">
    <property type="component" value="Chromosome"/>
</dbReference>
<dbReference type="GO" id="GO:0005737">
    <property type="term" value="C:cytoplasm"/>
    <property type="evidence" value="ECO:0000318"/>
    <property type="project" value="GO_Central"/>
</dbReference>
<dbReference type="GO" id="GO:0005829">
    <property type="term" value="C:cytosol"/>
    <property type="evidence" value="ECO:0000318"/>
    <property type="project" value="GO_Central"/>
</dbReference>
<dbReference type="GO" id="GO:0008694">
    <property type="term" value="F:3-octaprenyl-4-hydroxybenzoate carboxy-lyase activity"/>
    <property type="evidence" value="ECO:0000318"/>
    <property type="project" value="GO_Central"/>
</dbReference>
<dbReference type="GO" id="GO:0018799">
    <property type="term" value="F:4-hydroxybenzoate decarboxylase activity"/>
    <property type="evidence" value="ECO:0007669"/>
    <property type="project" value="UniProtKB-EC"/>
</dbReference>
<dbReference type="GO" id="GO:0046872">
    <property type="term" value="F:metal ion binding"/>
    <property type="evidence" value="ECO:0007669"/>
    <property type="project" value="UniProtKB-KW"/>
</dbReference>
<dbReference type="GO" id="GO:0009056">
    <property type="term" value="P:catabolic process"/>
    <property type="evidence" value="ECO:0007669"/>
    <property type="project" value="UniProtKB-KW"/>
</dbReference>
<dbReference type="GO" id="GO:0009636">
    <property type="term" value="P:response to toxic substance"/>
    <property type="evidence" value="ECO:0007669"/>
    <property type="project" value="UniProtKB-KW"/>
</dbReference>
<dbReference type="GO" id="GO:0006744">
    <property type="term" value="P:ubiquinone biosynthetic process"/>
    <property type="evidence" value="ECO:0000318"/>
    <property type="project" value="GO_Central"/>
</dbReference>
<dbReference type="FunFam" id="3.40.1670.10:FF:000003">
    <property type="entry name" value="Phenolic acid decarboxylase"/>
    <property type="match status" value="1"/>
</dbReference>
<dbReference type="Gene3D" id="3.40.1670.10">
    <property type="entry name" value="UbiD C-terminal domain-like"/>
    <property type="match status" value="1"/>
</dbReference>
<dbReference type="HAMAP" id="MF_01985">
    <property type="entry name" value="UbiD_YclC"/>
    <property type="match status" value="1"/>
</dbReference>
<dbReference type="InterPro" id="IPR032902">
    <property type="entry name" value="BsdC"/>
</dbReference>
<dbReference type="InterPro" id="IPR053417">
    <property type="entry name" value="PAD_UbiD-like"/>
</dbReference>
<dbReference type="InterPro" id="IPR002830">
    <property type="entry name" value="UbiD"/>
</dbReference>
<dbReference type="InterPro" id="IPR049381">
    <property type="entry name" value="UbiD-like_C"/>
</dbReference>
<dbReference type="InterPro" id="IPR049383">
    <property type="entry name" value="UbiD-like_N"/>
</dbReference>
<dbReference type="InterPro" id="IPR048304">
    <property type="entry name" value="UbiD_Rift_dom"/>
</dbReference>
<dbReference type="NCBIfam" id="TIGR00148">
    <property type="entry name" value="UbiD family decarboxylase"/>
    <property type="match status" value="1"/>
</dbReference>
<dbReference type="NCBIfam" id="NF041204">
    <property type="entry name" value="VdcC"/>
    <property type="match status" value="1"/>
</dbReference>
<dbReference type="PANTHER" id="PTHR30108">
    <property type="entry name" value="3-OCTAPRENYL-4-HYDROXYBENZOATE CARBOXY-LYASE-RELATED"/>
    <property type="match status" value="1"/>
</dbReference>
<dbReference type="PANTHER" id="PTHR30108:SF17">
    <property type="entry name" value="FERULIC ACID DECARBOXYLASE 1"/>
    <property type="match status" value="1"/>
</dbReference>
<dbReference type="Pfam" id="PF01977">
    <property type="entry name" value="UbiD"/>
    <property type="match status" value="1"/>
</dbReference>
<dbReference type="Pfam" id="PF20696">
    <property type="entry name" value="UbiD_C"/>
    <property type="match status" value="1"/>
</dbReference>
<dbReference type="Pfam" id="PF20695">
    <property type="entry name" value="UbiD_N"/>
    <property type="match status" value="1"/>
</dbReference>
<dbReference type="SUPFAM" id="SSF50475">
    <property type="entry name" value="FMN-binding split barrel"/>
    <property type="match status" value="1"/>
</dbReference>
<dbReference type="SUPFAM" id="SSF143968">
    <property type="entry name" value="UbiD C-terminal domain-like"/>
    <property type="match status" value="1"/>
</dbReference>
<proteinExistence type="evidence at protein level"/>
<feature type="chain" id="PRO_0000157369" description="Phenolic acid decarboxylase">
    <location>
        <begin position="1"/>
        <end position="473"/>
    </location>
</feature>
<feature type="active site" description="Proton donor" evidence="1">
    <location>
        <position position="273"/>
    </location>
</feature>
<feature type="binding site" evidence="1">
    <location>
        <begin position="160"/>
        <end position="165"/>
    </location>
    <ligand>
        <name>prenylated FMN</name>
        <dbReference type="ChEBI" id="CHEBI:87746"/>
    </ligand>
</feature>
<feature type="binding site" evidence="1">
    <location>
        <position position="160"/>
    </location>
    <ligand>
        <name>Mn(2+)</name>
        <dbReference type="ChEBI" id="CHEBI:29035"/>
    </ligand>
</feature>
<feature type="binding site" evidence="1">
    <location>
        <begin position="181"/>
        <end position="182"/>
    </location>
    <ligand>
        <name>prenylated FMN</name>
        <dbReference type="ChEBI" id="CHEBI:87746"/>
    </ligand>
</feature>
<feature type="binding site" evidence="1">
    <location>
        <position position="182"/>
    </location>
    <ligand>
        <name>Mn(2+)</name>
        <dbReference type="ChEBI" id="CHEBI:29035"/>
    </ligand>
</feature>
<feature type="binding site" evidence="1">
    <location>
        <position position="224"/>
    </location>
    <ligand>
        <name>Mn(2+)</name>
        <dbReference type="ChEBI" id="CHEBI:29035"/>
    </ligand>
</feature>